<keyword id="KW-0028">Amino-acid biosynthesis</keyword>
<keyword id="KW-0963">Cytoplasm</keyword>
<keyword id="KW-0368">Histidine biosynthesis</keyword>
<keyword id="KW-0413">Isomerase</keyword>
<protein>
    <recommendedName>
        <fullName evidence="1">1-(5-phosphoribosyl)-5-[(5-phosphoribosylamino)methylideneamino] imidazole-4-carboxamide isomerase</fullName>
        <ecNumber evidence="1">5.3.1.16</ecNumber>
    </recommendedName>
    <alternativeName>
        <fullName evidence="1">Phosphoribosylformimino-5-aminoimidazole carboxamide ribotide isomerase</fullName>
    </alternativeName>
</protein>
<dbReference type="EC" id="5.3.1.16" evidence="1"/>
<dbReference type="EMBL" id="CP000283">
    <property type="protein sequence ID" value="ABE37650.1"/>
    <property type="molecule type" value="Genomic_DNA"/>
</dbReference>
<dbReference type="SMR" id="Q13E39"/>
<dbReference type="STRING" id="316057.RPD_0412"/>
<dbReference type="KEGG" id="rpd:RPD_0412"/>
<dbReference type="eggNOG" id="COG0106">
    <property type="taxonomic scope" value="Bacteria"/>
</dbReference>
<dbReference type="HOGENOM" id="CLU_048577_1_1_5"/>
<dbReference type="BioCyc" id="RPAL316057:RPD_RS02120-MONOMER"/>
<dbReference type="UniPathway" id="UPA00031">
    <property type="reaction ID" value="UER00009"/>
</dbReference>
<dbReference type="Proteomes" id="UP000001818">
    <property type="component" value="Chromosome"/>
</dbReference>
<dbReference type="GO" id="GO:0005737">
    <property type="term" value="C:cytoplasm"/>
    <property type="evidence" value="ECO:0007669"/>
    <property type="project" value="UniProtKB-SubCell"/>
</dbReference>
<dbReference type="GO" id="GO:0003949">
    <property type="term" value="F:1-(5-phosphoribosyl)-5-[(5-phosphoribosylamino)methylideneamino]imidazole-4-carboxamide isomerase activity"/>
    <property type="evidence" value="ECO:0007669"/>
    <property type="project" value="UniProtKB-UniRule"/>
</dbReference>
<dbReference type="GO" id="GO:0000105">
    <property type="term" value="P:L-histidine biosynthetic process"/>
    <property type="evidence" value="ECO:0007669"/>
    <property type="project" value="UniProtKB-UniRule"/>
</dbReference>
<dbReference type="GO" id="GO:0000162">
    <property type="term" value="P:L-tryptophan biosynthetic process"/>
    <property type="evidence" value="ECO:0007669"/>
    <property type="project" value="TreeGrafter"/>
</dbReference>
<dbReference type="CDD" id="cd04732">
    <property type="entry name" value="HisA"/>
    <property type="match status" value="1"/>
</dbReference>
<dbReference type="FunFam" id="3.20.20.70:FF:000009">
    <property type="entry name" value="1-(5-phosphoribosyl)-5-[(5-phosphoribosylamino)methylideneamino] imidazole-4-carboxamide isomerase"/>
    <property type="match status" value="1"/>
</dbReference>
<dbReference type="Gene3D" id="3.20.20.70">
    <property type="entry name" value="Aldolase class I"/>
    <property type="match status" value="1"/>
</dbReference>
<dbReference type="HAMAP" id="MF_01014">
    <property type="entry name" value="HisA"/>
    <property type="match status" value="1"/>
</dbReference>
<dbReference type="InterPro" id="IPR013785">
    <property type="entry name" value="Aldolase_TIM"/>
</dbReference>
<dbReference type="InterPro" id="IPR006062">
    <property type="entry name" value="His_biosynth"/>
</dbReference>
<dbReference type="InterPro" id="IPR006063">
    <property type="entry name" value="HisA_bact_arch"/>
</dbReference>
<dbReference type="InterPro" id="IPR044524">
    <property type="entry name" value="Isoase_HisA-like"/>
</dbReference>
<dbReference type="InterPro" id="IPR023016">
    <property type="entry name" value="Isoase_HisA-like_bact"/>
</dbReference>
<dbReference type="InterPro" id="IPR011060">
    <property type="entry name" value="RibuloseP-bd_barrel"/>
</dbReference>
<dbReference type="NCBIfam" id="TIGR00007">
    <property type="entry name" value="1-(5-phosphoribosyl)-5-[(5-phosphoribosylamino)methylideneamino]imidazole-4-carboxamide isomerase"/>
    <property type="match status" value="1"/>
</dbReference>
<dbReference type="NCBIfam" id="NF010112">
    <property type="entry name" value="PRK13585.1"/>
    <property type="match status" value="1"/>
</dbReference>
<dbReference type="PANTHER" id="PTHR43090">
    <property type="entry name" value="1-(5-PHOSPHORIBOSYL)-5-[(5-PHOSPHORIBOSYLAMINO)METHYLIDENEAMINO] IMIDAZOLE-4-CARBOXAMIDE ISOMERASE"/>
    <property type="match status" value="1"/>
</dbReference>
<dbReference type="PANTHER" id="PTHR43090:SF2">
    <property type="entry name" value="1-(5-PHOSPHORIBOSYL)-5-[(5-PHOSPHORIBOSYLAMINO)METHYLIDENEAMINO] IMIDAZOLE-4-CARBOXAMIDE ISOMERASE"/>
    <property type="match status" value="1"/>
</dbReference>
<dbReference type="Pfam" id="PF00977">
    <property type="entry name" value="His_biosynth"/>
    <property type="match status" value="1"/>
</dbReference>
<dbReference type="SUPFAM" id="SSF51366">
    <property type="entry name" value="Ribulose-phoshate binding barrel"/>
    <property type="match status" value="1"/>
</dbReference>
<feature type="chain" id="PRO_0000290526" description="1-(5-phosphoribosyl)-5-[(5-phosphoribosylamino)methylideneamino] imidazole-4-carboxamide isomerase">
    <location>
        <begin position="1"/>
        <end position="245"/>
    </location>
</feature>
<feature type="active site" description="Proton acceptor" evidence="1">
    <location>
        <position position="8"/>
    </location>
</feature>
<feature type="active site" description="Proton donor" evidence="1">
    <location>
        <position position="129"/>
    </location>
</feature>
<accession>Q13E39</accession>
<sequence length="245" mass="25553">MILFPAIDLKNGQCVRLEQGDMARATVFNLDPAAQARSFAAQGFQYLHVVDLDGAFAGKPVNAQAVESMLKVVSMPVQLGGGIRDLKTVEGWLAKGISRVIIGTAAVRDPALVKQAAKKFPGRVAVGLDARDGKVAVEGWAESSQVTALEIAQRFEDAGVAAIIFTDIARDGLLKGINWEATIALAEAVSIPVIASGGLASIDDVKALLSPRANKLEGAIAGRALYDGRLDPAEALALIDAARAA</sequence>
<evidence type="ECO:0000255" key="1">
    <source>
        <dbReference type="HAMAP-Rule" id="MF_01014"/>
    </source>
</evidence>
<gene>
    <name evidence="1" type="primary">hisA</name>
    <name type="ordered locus">RPD_0412</name>
</gene>
<name>HIS4_RHOPS</name>
<proteinExistence type="inferred from homology"/>
<reference key="1">
    <citation type="submission" date="2006-03" db="EMBL/GenBank/DDBJ databases">
        <title>Complete sequence of Rhodopseudomonas palustris BisB5.</title>
        <authorList>
            <consortium name="US DOE Joint Genome Institute"/>
            <person name="Copeland A."/>
            <person name="Lucas S."/>
            <person name="Lapidus A."/>
            <person name="Barry K."/>
            <person name="Detter J.C."/>
            <person name="Glavina del Rio T."/>
            <person name="Hammon N."/>
            <person name="Israni S."/>
            <person name="Dalin E."/>
            <person name="Tice H."/>
            <person name="Pitluck S."/>
            <person name="Chain P."/>
            <person name="Malfatti S."/>
            <person name="Shin M."/>
            <person name="Vergez L."/>
            <person name="Schmutz J."/>
            <person name="Larimer F."/>
            <person name="Land M."/>
            <person name="Hauser L."/>
            <person name="Pelletier D.A."/>
            <person name="Kyrpides N."/>
            <person name="Lykidis A."/>
            <person name="Oda Y."/>
            <person name="Harwood C.S."/>
            <person name="Richardson P."/>
        </authorList>
    </citation>
    <scope>NUCLEOTIDE SEQUENCE [LARGE SCALE GENOMIC DNA]</scope>
    <source>
        <strain>BisB5</strain>
    </source>
</reference>
<comment type="catalytic activity">
    <reaction evidence="1">
        <text>1-(5-phospho-beta-D-ribosyl)-5-[(5-phospho-beta-D-ribosylamino)methylideneamino]imidazole-4-carboxamide = 5-[(5-phospho-1-deoxy-D-ribulos-1-ylimino)methylamino]-1-(5-phospho-beta-D-ribosyl)imidazole-4-carboxamide</text>
        <dbReference type="Rhea" id="RHEA:15469"/>
        <dbReference type="ChEBI" id="CHEBI:58435"/>
        <dbReference type="ChEBI" id="CHEBI:58525"/>
        <dbReference type="EC" id="5.3.1.16"/>
    </reaction>
</comment>
<comment type="pathway">
    <text evidence="1">Amino-acid biosynthesis; L-histidine biosynthesis; L-histidine from 5-phospho-alpha-D-ribose 1-diphosphate: step 4/9.</text>
</comment>
<comment type="subcellular location">
    <subcellularLocation>
        <location evidence="1">Cytoplasm</location>
    </subcellularLocation>
</comment>
<comment type="similarity">
    <text evidence="1">Belongs to the HisA/HisF family.</text>
</comment>
<organism>
    <name type="scientific">Rhodopseudomonas palustris (strain BisB5)</name>
    <dbReference type="NCBI Taxonomy" id="316057"/>
    <lineage>
        <taxon>Bacteria</taxon>
        <taxon>Pseudomonadati</taxon>
        <taxon>Pseudomonadota</taxon>
        <taxon>Alphaproteobacteria</taxon>
        <taxon>Hyphomicrobiales</taxon>
        <taxon>Nitrobacteraceae</taxon>
        <taxon>Rhodopseudomonas</taxon>
    </lineage>
</organism>